<dbReference type="EC" id="7.1.1.-" evidence="1"/>
<dbReference type="EMBL" id="AP010918">
    <property type="protein sequence ID" value="BAH27443.1"/>
    <property type="molecule type" value="Genomic_DNA"/>
</dbReference>
<dbReference type="RefSeq" id="WP_003416425.1">
    <property type="nucleotide sequence ID" value="NZ_CP014566.1"/>
</dbReference>
<dbReference type="SMR" id="C1AGR4"/>
<dbReference type="KEGG" id="mbt:JTY_3165"/>
<dbReference type="HOGENOM" id="CLU_042628_4_0_11"/>
<dbReference type="GO" id="GO:0005886">
    <property type="term" value="C:plasma membrane"/>
    <property type="evidence" value="ECO:0007669"/>
    <property type="project" value="UniProtKB-SubCell"/>
</dbReference>
<dbReference type="GO" id="GO:0008137">
    <property type="term" value="F:NADH dehydrogenase (ubiquinone) activity"/>
    <property type="evidence" value="ECO:0007669"/>
    <property type="project" value="InterPro"/>
</dbReference>
<dbReference type="GO" id="GO:0050136">
    <property type="term" value="F:NADH:ubiquinone reductase (non-electrogenic) activity"/>
    <property type="evidence" value="ECO:0007669"/>
    <property type="project" value="UniProtKB-UniRule"/>
</dbReference>
<dbReference type="GO" id="GO:0048038">
    <property type="term" value="F:quinone binding"/>
    <property type="evidence" value="ECO:0007669"/>
    <property type="project" value="UniProtKB-KW"/>
</dbReference>
<dbReference type="FunFam" id="3.30.460.80:FF:000006">
    <property type="entry name" value="NADH-quinone oxidoreductase subunit C"/>
    <property type="match status" value="1"/>
</dbReference>
<dbReference type="Gene3D" id="3.30.460.80">
    <property type="entry name" value="NADH:ubiquinone oxidoreductase, 30kDa subunit"/>
    <property type="match status" value="1"/>
</dbReference>
<dbReference type="HAMAP" id="MF_01357">
    <property type="entry name" value="NDH1_NuoC"/>
    <property type="match status" value="1"/>
</dbReference>
<dbReference type="InterPro" id="IPR010218">
    <property type="entry name" value="NADH_DH_suC"/>
</dbReference>
<dbReference type="InterPro" id="IPR037232">
    <property type="entry name" value="NADH_quin_OxRdtase_su_C/D-like"/>
</dbReference>
<dbReference type="InterPro" id="IPR001268">
    <property type="entry name" value="NADH_UbQ_OxRdtase_30kDa_su"/>
</dbReference>
<dbReference type="NCBIfam" id="TIGR01961">
    <property type="entry name" value="NuoC_fam"/>
    <property type="match status" value="1"/>
</dbReference>
<dbReference type="NCBIfam" id="NF005856">
    <property type="entry name" value="PRK07785.1"/>
    <property type="match status" value="1"/>
</dbReference>
<dbReference type="PANTHER" id="PTHR10884:SF14">
    <property type="entry name" value="NADH DEHYDROGENASE [UBIQUINONE] IRON-SULFUR PROTEIN 3, MITOCHONDRIAL"/>
    <property type="match status" value="1"/>
</dbReference>
<dbReference type="PANTHER" id="PTHR10884">
    <property type="entry name" value="NADH DEHYDROGENASE UBIQUINONE IRON-SULFUR PROTEIN 3"/>
    <property type="match status" value="1"/>
</dbReference>
<dbReference type="Pfam" id="PF00329">
    <property type="entry name" value="Complex1_30kDa"/>
    <property type="match status" value="1"/>
</dbReference>
<dbReference type="SUPFAM" id="SSF143243">
    <property type="entry name" value="Nqo5-like"/>
    <property type="match status" value="1"/>
</dbReference>
<gene>
    <name evidence="1" type="primary">nuoC</name>
    <name type="ordered locus">JTY_3165</name>
</gene>
<feature type="chain" id="PRO_1000166674" description="NADH-quinone oxidoreductase subunit C">
    <location>
        <begin position="1"/>
        <end position="236"/>
    </location>
</feature>
<feature type="region of interest" description="Disordered" evidence="2">
    <location>
        <begin position="1"/>
        <end position="20"/>
    </location>
</feature>
<comment type="function">
    <text evidence="1">NDH-1 shuttles electrons from NADH, via FMN and iron-sulfur (Fe-S) centers, to quinones in the respiratory chain. The immediate electron acceptor for the enzyme in this species is believed to be a menaquinone. Couples the redox reaction to proton translocation (for every two electrons transferred, four hydrogen ions are translocated across the cytoplasmic membrane), and thus conserves the redox energy in a proton gradient.</text>
</comment>
<comment type="catalytic activity">
    <reaction evidence="1">
        <text>a quinone + NADH + 5 H(+)(in) = a quinol + NAD(+) + 4 H(+)(out)</text>
        <dbReference type="Rhea" id="RHEA:57888"/>
        <dbReference type="ChEBI" id="CHEBI:15378"/>
        <dbReference type="ChEBI" id="CHEBI:24646"/>
        <dbReference type="ChEBI" id="CHEBI:57540"/>
        <dbReference type="ChEBI" id="CHEBI:57945"/>
        <dbReference type="ChEBI" id="CHEBI:132124"/>
    </reaction>
</comment>
<comment type="subunit">
    <text evidence="1">NDH-1 is composed of 14 different subunits. Subunits NuoB, C, D, E, F, and G constitute the peripheral sector of the complex.</text>
</comment>
<comment type="subcellular location">
    <subcellularLocation>
        <location evidence="1">Cell membrane</location>
        <topology evidence="1">Peripheral membrane protein</topology>
        <orientation evidence="1">Cytoplasmic side</orientation>
    </subcellularLocation>
</comment>
<comment type="similarity">
    <text evidence="1">Belongs to the complex I 30 kDa subunit family.</text>
</comment>
<sequence>MSPPNQDAQEGRPDSPTAEVVDVRRGMFGVSGTGDTSGYGRLVRQVVLPGSSPRPYGGYFDDIVDRLAEALRHERVEFEDAVEKVVVYRDELTLHVRRDLLPRVAQRLRDEPELRFELCLGVSGVHYPHETGRELHAVYPLQSITHNRRLRLEVSAPDSDPHIPSLFAIYPTNDWHERETYDFFGIIFDGHPALTRIEMPDDWQGHPQRKDYPLGGIPVEYKGAQIPPPDERRGYN</sequence>
<protein>
    <recommendedName>
        <fullName evidence="1">NADH-quinone oxidoreductase subunit C</fullName>
        <ecNumber evidence="1">7.1.1.-</ecNumber>
    </recommendedName>
    <alternativeName>
        <fullName evidence="1">NADH dehydrogenase I subunit C</fullName>
    </alternativeName>
    <alternativeName>
        <fullName evidence="1">NDH-1 subunit C</fullName>
    </alternativeName>
</protein>
<evidence type="ECO:0000255" key="1">
    <source>
        <dbReference type="HAMAP-Rule" id="MF_01357"/>
    </source>
</evidence>
<evidence type="ECO:0000256" key="2">
    <source>
        <dbReference type="SAM" id="MobiDB-lite"/>
    </source>
</evidence>
<reference key="1">
    <citation type="journal article" date="2009" name="Vaccine">
        <title>Whole genome sequence analysis of Mycobacterium bovis bacillus Calmette-Guerin (BCG) Tokyo 172: a comparative study of BCG vaccine substrains.</title>
        <authorList>
            <person name="Seki M."/>
            <person name="Honda I."/>
            <person name="Fujita I."/>
            <person name="Yano I."/>
            <person name="Yamamoto S."/>
            <person name="Koyama A."/>
        </authorList>
    </citation>
    <scope>NUCLEOTIDE SEQUENCE [LARGE SCALE GENOMIC DNA]</scope>
    <source>
        <strain>BCG / Tokyo 172 / ATCC 35737 / TMC 1019</strain>
    </source>
</reference>
<organism>
    <name type="scientific">Mycobacterium bovis (strain BCG / Tokyo 172 / ATCC 35737 / TMC 1019)</name>
    <dbReference type="NCBI Taxonomy" id="561275"/>
    <lineage>
        <taxon>Bacteria</taxon>
        <taxon>Bacillati</taxon>
        <taxon>Actinomycetota</taxon>
        <taxon>Actinomycetes</taxon>
        <taxon>Mycobacteriales</taxon>
        <taxon>Mycobacteriaceae</taxon>
        <taxon>Mycobacterium</taxon>
        <taxon>Mycobacterium tuberculosis complex</taxon>
    </lineage>
</organism>
<accession>C1AGR4</accession>
<proteinExistence type="inferred from homology"/>
<keyword id="KW-1003">Cell membrane</keyword>
<keyword id="KW-0472">Membrane</keyword>
<keyword id="KW-0520">NAD</keyword>
<keyword id="KW-0874">Quinone</keyword>
<keyword id="KW-1278">Translocase</keyword>
<keyword id="KW-0813">Transport</keyword>
<name>NUOC_MYCBT</name>